<reference key="1">
    <citation type="submission" date="2008-01" db="EMBL/GenBank/DDBJ databases">
        <title>Complete sequence of Pseudomonas putida GB-1.</title>
        <authorList>
            <consortium name="US DOE Joint Genome Institute"/>
            <person name="Copeland A."/>
            <person name="Lucas S."/>
            <person name="Lapidus A."/>
            <person name="Barry K."/>
            <person name="Glavina del Rio T."/>
            <person name="Dalin E."/>
            <person name="Tice H."/>
            <person name="Pitluck S."/>
            <person name="Bruce D."/>
            <person name="Goodwin L."/>
            <person name="Chertkov O."/>
            <person name="Brettin T."/>
            <person name="Detter J.C."/>
            <person name="Han C."/>
            <person name="Kuske C.R."/>
            <person name="Schmutz J."/>
            <person name="Larimer F."/>
            <person name="Land M."/>
            <person name="Hauser L."/>
            <person name="Kyrpides N."/>
            <person name="Kim E."/>
            <person name="McCarthy J.K."/>
            <person name="Richardson P."/>
        </authorList>
    </citation>
    <scope>NUCLEOTIDE SEQUENCE [LARGE SCALE GENOMIC DNA]</scope>
    <source>
        <strain>GB-1</strain>
    </source>
</reference>
<name>GLMU_PSEPG</name>
<gene>
    <name evidence="1" type="primary">glmU</name>
    <name type="ordered locus">PputGB1_5429</name>
</gene>
<evidence type="ECO:0000255" key="1">
    <source>
        <dbReference type="HAMAP-Rule" id="MF_01631"/>
    </source>
</evidence>
<sequence>MSLDIVILAAGQGTRMRSALPKVLHPVAGNSMLGHVIHSARQLQPQGIHVVIGHGAELVRERLAADDLNFVMQDKQLGTGHAVAQALPALTADTVLVLYGDVPLIEVETLQRLLAKASDQQLGLLTVTLEDPTGYGRIVRDEQGQVTAIVEHKDANDAQKAIKEGNTGILALPAARLADWMGRLSNNNAQGEYYLTDVIAMAVADGLVVATEQPHDPMEVQGANDRRQLSELERHYQLREGRRLMAQGVTLRDPARFDVRGEVTVGRDVLIDINVILEGKVVIEDDVQIGPNCVIKNTTLRKGAVVKANSHLEGAVMGEGSDAGPFARLRPGSVLDAKAHVGNFVELKNAHLGEGAKVGHLTYLGDAEIGARTNIGAGTITCNYDGANKFKTVMGEDVFIGSNNSLVAPVEIKAGATTAAGSTITQTVEAGDLAVARARQRNISGWKRPEKTKKS</sequence>
<organism>
    <name type="scientific">Pseudomonas putida (strain GB-1)</name>
    <dbReference type="NCBI Taxonomy" id="76869"/>
    <lineage>
        <taxon>Bacteria</taxon>
        <taxon>Pseudomonadati</taxon>
        <taxon>Pseudomonadota</taxon>
        <taxon>Gammaproteobacteria</taxon>
        <taxon>Pseudomonadales</taxon>
        <taxon>Pseudomonadaceae</taxon>
        <taxon>Pseudomonas</taxon>
    </lineage>
</organism>
<dbReference type="EC" id="2.7.7.23" evidence="1"/>
<dbReference type="EC" id="2.3.1.157" evidence="1"/>
<dbReference type="EMBL" id="CP000926">
    <property type="protein sequence ID" value="ABZ01311.1"/>
    <property type="molecule type" value="Genomic_DNA"/>
</dbReference>
<dbReference type="RefSeq" id="WP_012274907.1">
    <property type="nucleotide sequence ID" value="NC_010322.1"/>
</dbReference>
<dbReference type="SMR" id="B0KRA6"/>
<dbReference type="KEGG" id="ppg:PputGB1_5429"/>
<dbReference type="eggNOG" id="COG1207">
    <property type="taxonomic scope" value="Bacteria"/>
</dbReference>
<dbReference type="HOGENOM" id="CLU_029499_15_2_6"/>
<dbReference type="UniPathway" id="UPA00113">
    <property type="reaction ID" value="UER00532"/>
</dbReference>
<dbReference type="UniPathway" id="UPA00113">
    <property type="reaction ID" value="UER00533"/>
</dbReference>
<dbReference type="UniPathway" id="UPA00973"/>
<dbReference type="Proteomes" id="UP000002157">
    <property type="component" value="Chromosome"/>
</dbReference>
<dbReference type="GO" id="GO:0005737">
    <property type="term" value="C:cytoplasm"/>
    <property type="evidence" value="ECO:0007669"/>
    <property type="project" value="UniProtKB-SubCell"/>
</dbReference>
<dbReference type="GO" id="GO:0016020">
    <property type="term" value="C:membrane"/>
    <property type="evidence" value="ECO:0007669"/>
    <property type="project" value="GOC"/>
</dbReference>
<dbReference type="GO" id="GO:0019134">
    <property type="term" value="F:glucosamine-1-phosphate N-acetyltransferase activity"/>
    <property type="evidence" value="ECO:0007669"/>
    <property type="project" value="UniProtKB-UniRule"/>
</dbReference>
<dbReference type="GO" id="GO:0000287">
    <property type="term" value="F:magnesium ion binding"/>
    <property type="evidence" value="ECO:0007669"/>
    <property type="project" value="UniProtKB-UniRule"/>
</dbReference>
<dbReference type="GO" id="GO:0003977">
    <property type="term" value="F:UDP-N-acetylglucosamine diphosphorylase activity"/>
    <property type="evidence" value="ECO:0007669"/>
    <property type="project" value="UniProtKB-UniRule"/>
</dbReference>
<dbReference type="GO" id="GO:0000902">
    <property type="term" value="P:cell morphogenesis"/>
    <property type="evidence" value="ECO:0007669"/>
    <property type="project" value="UniProtKB-UniRule"/>
</dbReference>
<dbReference type="GO" id="GO:0071555">
    <property type="term" value="P:cell wall organization"/>
    <property type="evidence" value="ECO:0007669"/>
    <property type="project" value="UniProtKB-KW"/>
</dbReference>
<dbReference type="GO" id="GO:0009245">
    <property type="term" value="P:lipid A biosynthetic process"/>
    <property type="evidence" value="ECO:0007669"/>
    <property type="project" value="UniProtKB-UniRule"/>
</dbReference>
<dbReference type="GO" id="GO:0009252">
    <property type="term" value="P:peptidoglycan biosynthetic process"/>
    <property type="evidence" value="ECO:0007669"/>
    <property type="project" value="UniProtKB-UniRule"/>
</dbReference>
<dbReference type="GO" id="GO:0008360">
    <property type="term" value="P:regulation of cell shape"/>
    <property type="evidence" value="ECO:0007669"/>
    <property type="project" value="UniProtKB-KW"/>
</dbReference>
<dbReference type="GO" id="GO:0006048">
    <property type="term" value="P:UDP-N-acetylglucosamine biosynthetic process"/>
    <property type="evidence" value="ECO:0007669"/>
    <property type="project" value="UniProtKB-UniPathway"/>
</dbReference>
<dbReference type="CDD" id="cd02540">
    <property type="entry name" value="GT2_GlmU_N_bac"/>
    <property type="match status" value="1"/>
</dbReference>
<dbReference type="CDD" id="cd03353">
    <property type="entry name" value="LbH_GlmU_C"/>
    <property type="match status" value="1"/>
</dbReference>
<dbReference type="Gene3D" id="2.160.10.10">
    <property type="entry name" value="Hexapeptide repeat proteins"/>
    <property type="match status" value="1"/>
</dbReference>
<dbReference type="Gene3D" id="3.90.550.10">
    <property type="entry name" value="Spore Coat Polysaccharide Biosynthesis Protein SpsA, Chain A"/>
    <property type="match status" value="1"/>
</dbReference>
<dbReference type="HAMAP" id="MF_01631">
    <property type="entry name" value="GlmU"/>
    <property type="match status" value="1"/>
</dbReference>
<dbReference type="InterPro" id="IPR005882">
    <property type="entry name" value="Bifunctional_GlmU"/>
</dbReference>
<dbReference type="InterPro" id="IPR050065">
    <property type="entry name" value="GlmU-like"/>
</dbReference>
<dbReference type="InterPro" id="IPR038009">
    <property type="entry name" value="GlmU_C_LbH"/>
</dbReference>
<dbReference type="InterPro" id="IPR001451">
    <property type="entry name" value="Hexapep"/>
</dbReference>
<dbReference type="InterPro" id="IPR025877">
    <property type="entry name" value="MobA-like_NTP_Trfase"/>
</dbReference>
<dbReference type="InterPro" id="IPR029044">
    <property type="entry name" value="Nucleotide-diphossugar_trans"/>
</dbReference>
<dbReference type="InterPro" id="IPR011004">
    <property type="entry name" value="Trimer_LpxA-like_sf"/>
</dbReference>
<dbReference type="NCBIfam" id="TIGR01173">
    <property type="entry name" value="glmU"/>
    <property type="match status" value="1"/>
</dbReference>
<dbReference type="PANTHER" id="PTHR43584:SF3">
    <property type="entry name" value="BIFUNCTIONAL PROTEIN GLMU"/>
    <property type="match status" value="1"/>
</dbReference>
<dbReference type="PANTHER" id="PTHR43584">
    <property type="entry name" value="NUCLEOTIDYL TRANSFERASE"/>
    <property type="match status" value="1"/>
</dbReference>
<dbReference type="Pfam" id="PF00132">
    <property type="entry name" value="Hexapep"/>
    <property type="match status" value="1"/>
</dbReference>
<dbReference type="Pfam" id="PF14602">
    <property type="entry name" value="Hexapep_2"/>
    <property type="match status" value="1"/>
</dbReference>
<dbReference type="Pfam" id="PF12804">
    <property type="entry name" value="NTP_transf_3"/>
    <property type="match status" value="1"/>
</dbReference>
<dbReference type="SUPFAM" id="SSF53448">
    <property type="entry name" value="Nucleotide-diphospho-sugar transferases"/>
    <property type="match status" value="1"/>
</dbReference>
<dbReference type="SUPFAM" id="SSF51161">
    <property type="entry name" value="Trimeric LpxA-like enzymes"/>
    <property type="match status" value="1"/>
</dbReference>
<protein>
    <recommendedName>
        <fullName evidence="1">Bifunctional protein GlmU</fullName>
    </recommendedName>
    <domain>
        <recommendedName>
            <fullName evidence="1">UDP-N-acetylglucosamine pyrophosphorylase</fullName>
            <ecNumber evidence="1">2.7.7.23</ecNumber>
        </recommendedName>
        <alternativeName>
            <fullName evidence="1">N-acetylglucosamine-1-phosphate uridyltransferase</fullName>
        </alternativeName>
    </domain>
    <domain>
        <recommendedName>
            <fullName evidence="1">Glucosamine-1-phosphate N-acetyltransferase</fullName>
            <ecNumber evidence="1">2.3.1.157</ecNumber>
        </recommendedName>
    </domain>
</protein>
<feature type="chain" id="PRO_1000088136" description="Bifunctional protein GlmU">
    <location>
        <begin position="1"/>
        <end position="455"/>
    </location>
</feature>
<feature type="region of interest" description="Pyrophosphorylase" evidence="1">
    <location>
        <begin position="1"/>
        <end position="226"/>
    </location>
</feature>
<feature type="region of interest" description="Linker" evidence="1">
    <location>
        <begin position="227"/>
        <end position="247"/>
    </location>
</feature>
<feature type="region of interest" description="N-acetyltransferase" evidence="1">
    <location>
        <begin position="248"/>
        <end position="455"/>
    </location>
</feature>
<feature type="active site" description="Proton acceptor" evidence="1">
    <location>
        <position position="360"/>
    </location>
</feature>
<feature type="binding site" evidence="1">
    <location>
        <begin position="8"/>
        <end position="11"/>
    </location>
    <ligand>
        <name>UDP-N-acetyl-alpha-D-glucosamine</name>
        <dbReference type="ChEBI" id="CHEBI:57705"/>
    </ligand>
</feature>
<feature type="binding site" evidence="1">
    <location>
        <position position="22"/>
    </location>
    <ligand>
        <name>UDP-N-acetyl-alpha-D-glucosamine</name>
        <dbReference type="ChEBI" id="CHEBI:57705"/>
    </ligand>
</feature>
<feature type="binding site" evidence="1">
    <location>
        <position position="73"/>
    </location>
    <ligand>
        <name>UDP-N-acetyl-alpha-D-glucosamine</name>
        <dbReference type="ChEBI" id="CHEBI:57705"/>
    </ligand>
</feature>
<feature type="binding site" evidence="1">
    <location>
        <begin position="78"/>
        <end position="79"/>
    </location>
    <ligand>
        <name>UDP-N-acetyl-alpha-D-glucosamine</name>
        <dbReference type="ChEBI" id="CHEBI:57705"/>
    </ligand>
</feature>
<feature type="binding site" evidence="1">
    <location>
        <begin position="99"/>
        <end position="101"/>
    </location>
    <ligand>
        <name>UDP-N-acetyl-alpha-D-glucosamine</name>
        <dbReference type="ChEBI" id="CHEBI:57705"/>
    </ligand>
</feature>
<feature type="binding site" evidence="1">
    <location>
        <position position="101"/>
    </location>
    <ligand>
        <name>Mg(2+)</name>
        <dbReference type="ChEBI" id="CHEBI:18420"/>
    </ligand>
</feature>
<feature type="binding site" evidence="1">
    <location>
        <position position="136"/>
    </location>
    <ligand>
        <name>UDP-N-acetyl-alpha-D-glucosamine</name>
        <dbReference type="ChEBI" id="CHEBI:57705"/>
    </ligand>
</feature>
<feature type="binding site" evidence="1">
    <location>
        <position position="151"/>
    </location>
    <ligand>
        <name>UDP-N-acetyl-alpha-D-glucosamine</name>
        <dbReference type="ChEBI" id="CHEBI:57705"/>
    </ligand>
</feature>
<feature type="binding site" evidence="1">
    <location>
        <position position="166"/>
    </location>
    <ligand>
        <name>UDP-N-acetyl-alpha-D-glucosamine</name>
        <dbReference type="ChEBI" id="CHEBI:57705"/>
    </ligand>
</feature>
<feature type="binding site" evidence="1">
    <location>
        <position position="224"/>
    </location>
    <ligand>
        <name>Mg(2+)</name>
        <dbReference type="ChEBI" id="CHEBI:18420"/>
    </ligand>
</feature>
<feature type="binding site" evidence="1">
    <location>
        <position position="224"/>
    </location>
    <ligand>
        <name>UDP-N-acetyl-alpha-D-glucosamine</name>
        <dbReference type="ChEBI" id="CHEBI:57705"/>
    </ligand>
</feature>
<feature type="binding site" evidence="1">
    <location>
        <position position="330"/>
    </location>
    <ligand>
        <name>UDP-N-acetyl-alpha-D-glucosamine</name>
        <dbReference type="ChEBI" id="CHEBI:57705"/>
    </ligand>
</feature>
<feature type="binding site" evidence="1">
    <location>
        <position position="348"/>
    </location>
    <ligand>
        <name>UDP-N-acetyl-alpha-D-glucosamine</name>
        <dbReference type="ChEBI" id="CHEBI:57705"/>
    </ligand>
</feature>
<feature type="binding site" evidence="1">
    <location>
        <position position="363"/>
    </location>
    <ligand>
        <name>UDP-N-acetyl-alpha-D-glucosamine</name>
        <dbReference type="ChEBI" id="CHEBI:57705"/>
    </ligand>
</feature>
<feature type="binding site" evidence="1">
    <location>
        <position position="374"/>
    </location>
    <ligand>
        <name>UDP-N-acetyl-alpha-D-glucosamine</name>
        <dbReference type="ChEBI" id="CHEBI:57705"/>
    </ligand>
</feature>
<feature type="binding site" evidence="1">
    <location>
        <position position="377"/>
    </location>
    <ligand>
        <name>acetyl-CoA</name>
        <dbReference type="ChEBI" id="CHEBI:57288"/>
    </ligand>
</feature>
<feature type="binding site" evidence="1">
    <location>
        <begin position="383"/>
        <end position="384"/>
    </location>
    <ligand>
        <name>acetyl-CoA</name>
        <dbReference type="ChEBI" id="CHEBI:57288"/>
    </ligand>
</feature>
<feature type="binding site" evidence="1">
    <location>
        <position position="402"/>
    </location>
    <ligand>
        <name>acetyl-CoA</name>
        <dbReference type="ChEBI" id="CHEBI:57288"/>
    </ligand>
</feature>
<feature type="binding site" evidence="1">
    <location>
        <position position="420"/>
    </location>
    <ligand>
        <name>acetyl-CoA</name>
        <dbReference type="ChEBI" id="CHEBI:57288"/>
    </ligand>
</feature>
<feature type="binding site" evidence="1">
    <location>
        <position position="437"/>
    </location>
    <ligand>
        <name>acetyl-CoA</name>
        <dbReference type="ChEBI" id="CHEBI:57288"/>
    </ligand>
</feature>
<comment type="function">
    <text evidence="1">Catalyzes the last two sequential reactions in the de novo biosynthetic pathway for UDP-N-acetylglucosamine (UDP-GlcNAc). The C-terminal domain catalyzes the transfer of acetyl group from acetyl coenzyme A to glucosamine-1-phosphate (GlcN-1-P) to produce N-acetylglucosamine-1-phosphate (GlcNAc-1-P), which is converted into UDP-GlcNAc by the transfer of uridine 5-monophosphate (from uridine 5-triphosphate), a reaction catalyzed by the N-terminal domain.</text>
</comment>
<comment type="catalytic activity">
    <reaction evidence="1">
        <text>alpha-D-glucosamine 1-phosphate + acetyl-CoA = N-acetyl-alpha-D-glucosamine 1-phosphate + CoA + H(+)</text>
        <dbReference type="Rhea" id="RHEA:13725"/>
        <dbReference type="ChEBI" id="CHEBI:15378"/>
        <dbReference type="ChEBI" id="CHEBI:57287"/>
        <dbReference type="ChEBI" id="CHEBI:57288"/>
        <dbReference type="ChEBI" id="CHEBI:57776"/>
        <dbReference type="ChEBI" id="CHEBI:58516"/>
        <dbReference type="EC" id="2.3.1.157"/>
    </reaction>
</comment>
<comment type="catalytic activity">
    <reaction evidence="1">
        <text>N-acetyl-alpha-D-glucosamine 1-phosphate + UTP + H(+) = UDP-N-acetyl-alpha-D-glucosamine + diphosphate</text>
        <dbReference type="Rhea" id="RHEA:13509"/>
        <dbReference type="ChEBI" id="CHEBI:15378"/>
        <dbReference type="ChEBI" id="CHEBI:33019"/>
        <dbReference type="ChEBI" id="CHEBI:46398"/>
        <dbReference type="ChEBI" id="CHEBI:57705"/>
        <dbReference type="ChEBI" id="CHEBI:57776"/>
        <dbReference type="EC" id="2.7.7.23"/>
    </reaction>
</comment>
<comment type="cofactor">
    <cofactor evidence="1">
        <name>Mg(2+)</name>
        <dbReference type="ChEBI" id="CHEBI:18420"/>
    </cofactor>
    <text evidence="1">Binds 1 Mg(2+) ion per subunit.</text>
</comment>
<comment type="pathway">
    <text evidence="1">Nucleotide-sugar biosynthesis; UDP-N-acetyl-alpha-D-glucosamine biosynthesis; N-acetyl-alpha-D-glucosamine 1-phosphate from alpha-D-glucosamine 6-phosphate (route II): step 2/2.</text>
</comment>
<comment type="pathway">
    <text evidence="1">Nucleotide-sugar biosynthesis; UDP-N-acetyl-alpha-D-glucosamine biosynthesis; UDP-N-acetyl-alpha-D-glucosamine from N-acetyl-alpha-D-glucosamine 1-phosphate: step 1/1.</text>
</comment>
<comment type="pathway">
    <text evidence="1">Bacterial outer membrane biogenesis; LPS lipid A biosynthesis.</text>
</comment>
<comment type="subunit">
    <text evidence="1">Homotrimer.</text>
</comment>
<comment type="subcellular location">
    <subcellularLocation>
        <location evidence="1">Cytoplasm</location>
    </subcellularLocation>
</comment>
<comment type="similarity">
    <text evidence="1">In the N-terminal section; belongs to the N-acetylglucosamine-1-phosphate uridyltransferase family.</text>
</comment>
<comment type="similarity">
    <text evidence="1">In the C-terminal section; belongs to the transferase hexapeptide repeat family.</text>
</comment>
<keyword id="KW-0012">Acyltransferase</keyword>
<keyword id="KW-0133">Cell shape</keyword>
<keyword id="KW-0961">Cell wall biogenesis/degradation</keyword>
<keyword id="KW-0963">Cytoplasm</keyword>
<keyword id="KW-0460">Magnesium</keyword>
<keyword id="KW-0479">Metal-binding</keyword>
<keyword id="KW-0511">Multifunctional enzyme</keyword>
<keyword id="KW-0548">Nucleotidyltransferase</keyword>
<keyword id="KW-0573">Peptidoglycan synthesis</keyword>
<keyword id="KW-0677">Repeat</keyword>
<keyword id="KW-0808">Transferase</keyword>
<accession>B0KRA6</accession>
<proteinExistence type="inferred from homology"/>